<feature type="chain" id="PRO_0000126889" description="Phenylalanine--tRNA ligase beta subunit">
    <location>
        <begin position="1"/>
        <end position="801"/>
    </location>
</feature>
<feature type="domain" description="tRNA-binding" evidence="1">
    <location>
        <begin position="39"/>
        <end position="147"/>
    </location>
</feature>
<feature type="domain" description="B5" evidence="1">
    <location>
        <begin position="401"/>
        <end position="477"/>
    </location>
</feature>
<feature type="domain" description="FDX-ACB" evidence="1">
    <location>
        <begin position="708"/>
        <end position="801"/>
    </location>
</feature>
<feature type="binding site" evidence="1">
    <location>
        <position position="455"/>
    </location>
    <ligand>
        <name>Mg(2+)</name>
        <dbReference type="ChEBI" id="CHEBI:18420"/>
        <note>shared with alpha subunit</note>
    </ligand>
</feature>
<feature type="binding site" evidence="1">
    <location>
        <position position="461"/>
    </location>
    <ligand>
        <name>Mg(2+)</name>
        <dbReference type="ChEBI" id="CHEBI:18420"/>
        <note>shared with alpha subunit</note>
    </ligand>
</feature>
<feature type="binding site" evidence="1">
    <location>
        <position position="464"/>
    </location>
    <ligand>
        <name>Mg(2+)</name>
        <dbReference type="ChEBI" id="CHEBI:18420"/>
        <note>shared with alpha subunit</note>
    </ligand>
</feature>
<feature type="binding site" evidence="1">
    <location>
        <position position="465"/>
    </location>
    <ligand>
        <name>Mg(2+)</name>
        <dbReference type="ChEBI" id="CHEBI:18420"/>
        <note>shared with alpha subunit</note>
    </ligand>
</feature>
<keyword id="KW-0030">Aminoacyl-tRNA synthetase</keyword>
<keyword id="KW-0067">ATP-binding</keyword>
<keyword id="KW-0963">Cytoplasm</keyword>
<keyword id="KW-0436">Ligase</keyword>
<keyword id="KW-0460">Magnesium</keyword>
<keyword id="KW-0479">Metal-binding</keyword>
<keyword id="KW-0547">Nucleotide-binding</keyword>
<keyword id="KW-0648">Protein biosynthesis</keyword>
<keyword id="KW-1185">Reference proteome</keyword>
<keyword id="KW-0694">RNA-binding</keyword>
<keyword id="KW-0820">tRNA-binding</keyword>
<proteinExistence type="inferred from homology"/>
<organism>
    <name type="scientific">Geobacter sulfurreducens (strain ATCC 51573 / DSM 12127 / PCA)</name>
    <dbReference type="NCBI Taxonomy" id="243231"/>
    <lineage>
        <taxon>Bacteria</taxon>
        <taxon>Pseudomonadati</taxon>
        <taxon>Thermodesulfobacteriota</taxon>
        <taxon>Desulfuromonadia</taxon>
        <taxon>Geobacterales</taxon>
        <taxon>Geobacteraceae</taxon>
        <taxon>Geobacter</taxon>
    </lineage>
</organism>
<name>SYFB_GEOSL</name>
<accession>Q74CZ9</accession>
<comment type="catalytic activity">
    <reaction evidence="1">
        <text>tRNA(Phe) + L-phenylalanine + ATP = L-phenylalanyl-tRNA(Phe) + AMP + diphosphate + H(+)</text>
        <dbReference type="Rhea" id="RHEA:19413"/>
        <dbReference type="Rhea" id="RHEA-COMP:9668"/>
        <dbReference type="Rhea" id="RHEA-COMP:9699"/>
        <dbReference type="ChEBI" id="CHEBI:15378"/>
        <dbReference type="ChEBI" id="CHEBI:30616"/>
        <dbReference type="ChEBI" id="CHEBI:33019"/>
        <dbReference type="ChEBI" id="CHEBI:58095"/>
        <dbReference type="ChEBI" id="CHEBI:78442"/>
        <dbReference type="ChEBI" id="CHEBI:78531"/>
        <dbReference type="ChEBI" id="CHEBI:456215"/>
        <dbReference type="EC" id="6.1.1.20"/>
    </reaction>
</comment>
<comment type="cofactor">
    <cofactor evidence="1">
        <name>Mg(2+)</name>
        <dbReference type="ChEBI" id="CHEBI:18420"/>
    </cofactor>
    <text evidence="1">Binds 2 magnesium ions per tetramer.</text>
</comment>
<comment type="subunit">
    <text evidence="1">Tetramer of two alpha and two beta subunits.</text>
</comment>
<comment type="subcellular location">
    <subcellularLocation>
        <location evidence="1">Cytoplasm</location>
    </subcellularLocation>
</comment>
<comment type="similarity">
    <text evidence="1">Belongs to the phenylalanyl-tRNA synthetase beta subunit family. Type 1 subfamily.</text>
</comment>
<protein>
    <recommendedName>
        <fullName evidence="1">Phenylalanine--tRNA ligase beta subunit</fullName>
        <ecNumber evidence="1">6.1.1.20</ecNumber>
    </recommendedName>
    <alternativeName>
        <fullName evidence="1">Phenylalanyl-tRNA synthetase beta subunit</fullName>
        <shortName evidence="1">PheRS</shortName>
    </alternativeName>
</protein>
<evidence type="ECO:0000255" key="1">
    <source>
        <dbReference type="HAMAP-Rule" id="MF_00283"/>
    </source>
</evidence>
<dbReference type="EC" id="6.1.1.20" evidence="1"/>
<dbReference type="EMBL" id="AE017180">
    <property type="protein sequence ID" value="AAR34894.1"/>
    <property type="molecule type" value="Genomic_DNA"/>
</dbReference>
<dbReference type="RefSeq" id="NP_952571.1">
    <property type="nucleotide sequence ID" value="NC_002939.5"/>
</dbReference>
<dbReference type="RefSeq" id="WP_010942167.1">
    <property type="nucleotide sequence ID" value="NC_002939.5"/>
</dbReference>
<dbReference type="SMR" id="Q74CZ9"/>
<dbReference type="FunCoup" id="Q74CZ9">
    <property type="interactions" value="503"/>
</dbReference>
<dbReference type="STRING" id="243231.GSU1520"/>
<dbReference type="EnsemblBacteria" id="AAR34894">
    <property type="protein sequence ID" value="AAR34894"/>
    <property type="gene ID" value="GSU1520"/>
</dbReference>
<dbReference type="KEGG" id="gsu:GSU1520"/>
<dbReference type="PATRIC" id="fig|243231.5.peg.1562"/>
<dbReference type="eggNOG" id="COG0072">
    <property type="taxonomic scope" value="Bacteria"/>
</dbReference>
<dbReference type="HOGENOM" id="CLU_016891_0_0_7"/>
<dbReference type="InParanoid" id="Q74CZ9"/>
<dbReference type="OrthoDB" id="9805455at2"/>
<dbReference type="Proteomes" id="UP000000577">
    <property type="component" value="Chromosome"/>
</dbReference>
<dbReference type="GO" id="GO:0009328">
    <property type="term" value="C:phenylalanine-tRNA ligase complex"/>
    <property type="evidence" value="ECO:0000318"/>
    <property type="project" value="GO_Central"/>
</dbReference>
<dbReference type="GO" id="GO:0005524">
    <property type="term" value="F:ATP binding"/>
    <property type="evidence" value="ECO:0007669"/>
    <property type="project" value="UniProtKB-UniRule"/>
</dbReference>
<dbReference type="GO" id="GO:0000287">
    <property type="term" value="F:magnesium ion binding"/>
    <property type="evidence" value="ECO:0007669"/>
    <property type="project" value="UniProtKB-UniRule"/>
</dbReference>
<dbReference type="GO" id="GO:0004826">
    <property type="term" value="F:phenylalanine-tRNA ligase activity"/>
    <property type="evidence" value="ECO:0007669"/>
    <property type="project" value="UniProtKB-UniRule"/>
</dbReference>
<dbReference type="GO" id="GO:0000049">
    <property type="term" value="F:tRNA binding"/>
    <property type="evidence" value="ECO:0007669"/>
    <property type="project" value="UniProtKB-KW"/>
</dbReference>
<dbReference type="GO" id="GO:0006432">
    <property type="term" value="P:phenylalanyl-tRNA aminoacylation"/>
    <property type="evidence" value="ECO:0000318"/>
    <property type="project" value="GO_Central"/>
</dbReference>
<dbReference type="CDD" id="cd00769">
    <property type="entry name" value="PheRS_beta_core"/>
    <property type="match status" value="1"/>
</dbReference>
<dbReference type="CDD" id="cd02796">
    <property type="entry name" value="tRNA_bind_bactPheRS"/>
    <property type="match status" value="1"/>
</dbReference>
<dbReference type="FunFam" id="2.40.50.140:FF:000045">
    <property type="entry name" value="Phenylalanine--tRNA ligase beta subunit"/>
    <property type="match status" value="1"/>
</dbReference>
<dbReference type="FunFam" id="3.30.56.10:FF:000002">
    <property type="entry name" value="Phenylalanine--tRNA ligase beta subunit"/>
    <property type="match status" value="1"/>
</dbReference>
<dbReference type="FunFam" id="3.30.70.380:FF:000001">
    <property type="entry name" value="Phenylalanine--tRNA ligase beta subunit"/>
    <property type="match status" value="1"/>
</dbReference>
<dbReference type="FunFam" id="3.30.930.10:FF:000022">
    <property type="entry name" value="Phenylalanine--tRNA ligase beta subunit"/>
    <property type="match status" value="1"/>
</dbReference>
<dbReference type="FunFam" id="3.50.40.10:FF:000001">
    <property type="entry name" value="Phenylalanine--tRNA ligase beta subunit"/>
    <property type="match status" value="1"/>
</dbReference>
<dbReference type="Gene3D" id="3.30.56.10">
    <property type="match status" value="2"/>
</dbReference>
<dbReference type="Gene3D" id="3.30.930.10">
    <property type="entry name" value="Bira Bifunctional Protein, Domain 2"/>
    <property type="match status" value="1"/>
</dbReference>
<dbReference type="Gene3D" id="3.30.70.380">
    <property type="entry name" value="Ferrodoxin-fold anticodon-binding domain"/>
    <property type="match status" value="1"/>
</dbReference>
<dbReference type="Gene3D" id="2.40.50.140">
    <property type="entry name" value="Nucleic acid-binding proteins"/>
    <property type="match status" value="1"/>
</dbReference>
<dbReference type="Gene3D" id="3.50.40.10">
    <property type="entry name" value="Phenylalanyl-trna Synthetase, Chain B, domain 3"/>
    <property type="match status" value="1"/>
</dbReference>
<dbReference type="HAMAP" id="MF_00283">
    <property type="entry name" value="Phe_tRNA_synth_beta1"/>
    <property type="match status" value="1"/>
</dbReference>
<dbReference type="InterPro" id="IPR045864">
    <property type="entry name" value="aa-tRNA-synth_II/BPL/LPL"/>
</dbReference>
<dbReference type="InterPro" id="IPR005146">
    <property type="entry name" value="B3/B4_tRNA-bd"/>
</dbReference>
<dbReference type="InterPro" id="IPR009061">
    <property type="entry name" value="DNA-bd_dom_put_sf"/>
</dbReference>
<dbReference type="InterPro" id="IPR005121">
    <property type="entry name" value="Fdx_antiC-bd"/>
</dbReference>
<dbReference type="InterPro" id="IPR036690">
    <property type="entry name" value="Fdx_antiC-bd_sf"/>
</dbReference>
<dbReference type="InterPro" id="IPR012340">
    <property type="entry name" value="NA-bd_OB-fold"/>
</dbReference>
<dbReference type="InterPro" id="IPR045060">
    <property type="entry name" value="Phe-tRNA-ligase_IIc_bsu"/>
</dbReference>
<dbReference type="InterPro" id="IPR004532">
    <property type="entry name" value="Phe-tRNA-ligase_IIc_bsu_bact"/>
</dbReference>
<dbReference type="InterPro" id="IPR020825">
    <property type="entry name" value="Phe-tRNA_synthase-like_B3/B4"/>
</dbReference>
<dbReference type="InterPro" id="IPR041616">
    <property type="entry name" value="PheRS_beta_core"/>
</dbReference>
<dbReference type="InterPro" id="IPR002547">
    <property type="entry name" value="tRNA-bd_dom"/>
</dbReference>
<dbReference type="InterPro" id="IPR033714">
    <property type="entry name" value="tRNA_bind_bactPheRS"/>
</dbReference>
<dbReference type="InterPro" id="IPR005147">
    <property type="entry name" value="tRNA_synthase_B5-dom"/>
</dbReference>
<dbReference type="NCBIfam" id="TIGR00472">
    <property type="entry name" value="pheT_bact"/>
    <property type="match status" value="1"/>
</dbReference>
<dbReference type="NCBIfam" id="NF045760">
    <property type="entry name" value="YtpR"/>
    <property type="match status" value="1"/>
</dbReference>
<dbReference type="PANTHER" id="PTHR10947:SF0">
    <property type="entry name" value="PHENYLALANINE--TRNA LIGASE BETA SUBUNIT"/>
    <property type="match status" value="1"/>
</dbReference>
<dbReference type="PANTHER" id="PTHR10947">
    <property type="entry name" value="PHENYLALANYL-TRNA SYNTHETASE BETA CHAIN AND LEUCINE-RICH REPEAT-CONTAINING PROTEIN 47"/>
    <property type="match status" value="1"/>
</dbReference>
<dbReference type="Pfam" id="PF03483">
    <property type="entry name" value="B3_4"/>
    <property type="match status" value="1"/>
</dbReference>
<dbReference type="Pfam" id="PF03484">
    <property type="entry name" value="B5"/>
    <property type="match status" value="1"/>
</dbReference>
<dbReference type="Pfam" id="PF03147">
    <property type="entry name" value="FDX-ACB"/>
    <property type="match status" value="1"/>
</dbReference>
<dbReference type="Pfam" id="PF01588">
    <property type="entry name" value="tRNA_bind"/>
    <property type="match status" value="1"/>
</dbReference>
<dbReference type="Pfam" id="PF17759">
    <property type="entry name" value="tRNA_synthFbeta"/>
    <property type="match status" value="1"/>
</dbReference>
<dbReference type="SMART" id="SM00873">
    <property type="entry name" value="B3_4"/>
    <property type="match status" value="1"/>
</dbReference>
<dbReference type="SMART" id="SM00874">
    <property type="entry name" value="B5"/>
    <property type="match status" value="1"/>
</dbReference>
<dbReference type="SMART" id="SM00896">
    <property type="entry name" value="FDX-ACB"/>
    <property type="match status" value="1"/>
</dbReference>
<dbReference type="SUPFAM" id="SSF54991">
    <property type="entry name" value="Anticodon-binding domain of PheRS"/>
    <property type="match status" value="1"/>
</dbReference>
<dbReference type="SUPFAM" id="SSF55681">
    <property type="entry name" value="Class II aaRS and biotin synthetases"/>
    <property type="match status" value="1"/>
</dbReference>
<dbReference type="SUPFAM" id="SSF50249">
    <property type="entry name" value="Nucleic acid-binding proteins"/>
    <property type="match status" value="1"/>
</dbReference>
<dbReference type="SUPFAM" id="SSF56037">
    <property type="entry name" value="PheT/TilS domain"/>
    <property type="match status" value="1"/>
</dbReference>
<dbReference type="SUPFAM" id="SSF46955">
    <property type="entry name" value="Putative DNA-binding domain"/>
    <property type="match status" value="1"/>
</dbReference>
<dbReference type="PROSITE" id="PS51483">
    <property type="entry name" value="B5"/>
    <property type="match status" value="1"/>
</dbReference>
<dbReference type="PROSITE" id="PS51447">
    <property type="entry name" value="FDX_ACB"/>
    <property type="match status" value="1"/>
</dbReference>
<dbReference type="PROSITE" id="PS50886">
    <property type="entry name" value="TRBD"/>
    <property type="match status" value="1"/>
</dbReference>
<sequence length="801" mass="88126">MIVTYNWLKEFVECDLSTQELGDLLTMLGLEVEGVREVGGGLDQVVVAVVEERRKHPNADKLSLCKVNNGREILDIVCGAQNFTAGDKVALAQIGAVLPGDFKIKRSKIRGEESCGMLCSERELGLSAESEGIMILPSDLPLGVPLFDALGLKDTIFEIGLTPNRADCLSVIGVAREIAAKLGKRITYPGHAVVESGEPVTQKATVIVEDPELCPRYTARFISGCSIGPSPAWLVRRLEAVGMRSINNVVDVTNYVLMEYGHPLHAFDADLLENSTIVVRRATDGEVFTTLDGQQRTLTAGDLTIRDGARSVALAGIMGGENSEIRDTTTNILLESAYFNPSAIRRTAKRLGLHTESSHRFERGADVAIVTRALDRAAALLAELAGGTVAAGIIDVYPTPVSHRTIRFRVDRCNALLGVELSANEMKALFHHLEFTTVTVEPGIIDVTVPTFRVDLEREIDLVEEVARLNGYDRIETTMPRARVFSDRPTKHQRMERRCRDLMVGQGFNEVITFSFMAPGALDRMMLGPEDGRRSVVALRNPLVDEQAVMRTTLLPGLLEAASRNLNYRSLDLRLFELRRVYLRVEGEQLPNEPLVLAGLMTGRRYPEGWNQEKHPLDFYDVKGVVEAVLDAFSVSGASYSSDDTDVFYHPGKSCTVKCGDLILGSLGELHPDVQDNFGIDQPVFYFELNFERLLSAARAASAVVPPSRFPDTFRDIAILVADETPAADIVRCIDGLRIREIESAAVFDLYKGVHVPEGKKSIAVRVRYRSTEKTLSDDEVSPLHQKVVDSLVAKLGATIR</sequence>
<reference key="1">
    <citation type="journal article" date="2003" name="Science">
        <title>Genome of Geobacter sulfurreducens: metal reduction in subsurface environments.</title>
        <authorList>
            <person name="Methe B.A."/>
            <person name="Nelson K.E."/>
            <person name="Eisen J.A."/>
            <person name="Paulsen I.T."/>
            <person name="Nelson W.C."/>
            <person name="Heidelberg J.F."/>
            <person name="Wu D."/>
            <person name="Wu M."/>
            <person name="Ward N.L."/>
            <person name="Beanan M.J."/>
            <person name="Dodson R.J."/>
            <person name="Madupu R."/>
            <person name="Brinkac L.M."/>
            <person name="Daugherty S.C."/>
            <person name="DeBoy R.T."/>
            <person name="Durkin A.S."/>
            <person name="Gwinn M.L."/>
            <person name="Kolonay J.F."/>
            <person name="Sullivan S.A."/>
            <person name="Haft D.H."/>
            <person name="Selengut J."/>
            <person name="Davidsen T.M."/>
            <person name="Zafar N."/>
            <person name="White O."/>
            <person name="Tran B."/>
            <person name="Romero C."/>
            <person name="Forberger H.A."/>
            <person name="Weidman J.F."/>
            <person name="Khouri H.M."/>
            <person name="Feldblyum T.V."/>
            <person name="Utterback T.R."/>
            <person name="Van Aken S.E."/>
            <person name="Lovley D.R."/>
            <person name="Fraser C.M."/>
        </authorList>
    </citation>
    <scope>NUCLEOTIDE SEQUENCE [LARGE SCALE GENOMIC DNA]</scope>
    <source>
        <strain>ATCC 51573 / DSM 12127 / PCA</strain>
    </source>
</reference>
<gene>
    <name evidence="1" type="primary">pheT</name>
    <name type="ordered locus">GSU1520</name>
</gene>